<feature type="chain" id="PRO_0000101482" description="Ribosomal RNA small subunit methyltransferase A">
    <location>
        <begin position="1"/>
        <end position="292"/>
    </location>
</feature>
<feature type="binding site" evidence="1">
    <location>
        <position position="28"/>
    </location>
    <ligand>
        <name>S-adenosyl-L-methionine</name>
        <dbReference type="ChEBI" id="CHEBI:59789"/>
    </ligand>
</feature>
<feature type="binding site" evidence="1">
    <location>
        <position position="30"/>
    </location>
    <ligand>
        <name>S-adenosyl-L-methionine</name>
        <dbReference type="ChEBI" id="CHEBI:59789"/>
    </ligand>
</feature>
<feature type="binding site" evidence="1">
    <location>
        <position position="55"/>
    </location>
    <ligand>
        <name>S-adenosyl-L-methionine</name>
        <dbReference type="ChEBI" id="CHEBI:59789"/>
    </ligand>
</feature>
<feature type="binding site" evidence="1">
    <location>
        <position position="76"/>
    </location>
    <ligand>
        <name>S-adenosyl-L-methionine</name>
        <dbReference type="ChEBI" id="CHEBI:59789"/>
    </ligand>
</feature>
<feature type="binding site" evidence="1">
    <location>
        <position position="101"/>
    </location>
    <ligand>
        <name>S-adenosyl-L-methionine</name>
        <dbReference type="ChEBI" id="CHEBI:59789"/>
    </ligand>
</feature>
<feature type="binding site" evidence="1">
    <location>
        <position position="126"/>
    </location>
    <ligand>
        <name>S-adenosyl-L-methionine</name>
        <dbReference type="ChEBI" id="CHEBI:59789"/>
    </ligand>
</feature>
<accession>Q6HPX5</accession>
<sequence>MKDIATPNRTKDIVEKYGFSFKKSLGQNFLIDTNVLNRIVDHAEIGSESGAIEIGPGIGALTEQLAKRAKKVVAFEIDQRLLPILDETLAPYGNVTVINKDVLKADVHEVFSEQFEEGQDVMVVANLPYYITTPILFKLLEEKLPVRGFVVMMQKEVGDRLAAKPGTKEYGSLSIAIQYYTEVETVMTVPRTVFVPQPNVDSAIIRLLKRPKPVVEVTDETFFFEVVRASFAQRRKTLMNNLSNNLNGFPKDKELLDRILTEVGIDPKRRGETLSIEEFATLSNALVLHKLS</sequence>
<reference key="1">
    <citation type="journal article" date="2006" name="J. Bacteriol.">
        <title>Pathogenomic sequence analysis of Bacillus cereus and Bacillus thuringiensis isolates closely related to Bacillus anthracis.</title>
        <authorList>
            <person name="Han C.S."/>
            <person name="Xie G."/>
            <person name="Challacombe J.F."/>
            <person name="Altherr M.R."/>
            <person name="Bhotika S.S."/>
            <person name="Bruce D."/>
            <person name="Campbell C.S."/>
            <person name="Campbell M.L."/>
            <person name="Chen J."/>
            <person name="Chertkov O."/>
            <person name="Cleland C."/>
            <person name="Dimitrijevic M."/>
            <person name="Doggett N.A."/>
            <person name="Fawcett J.J."/>
            <person name="Glavina T."/>
            <person name="Goodwin L.A."/>
            <person name="Hill K.K."/>
            <person name="Hitchcock P."/>
            <person name="Jackson P.J."/>
            <person name="Keim P."/>
            <person name="Kewalramani A.R."/>
            <person name="Longmire J."/>
            <person name="Lucas S."/>
            <person name="Malfatti S."/>
            <person name="McMurry K."/>
            <person name="Meincke L.J."/>
            <person name="Misra M."/>
            <person name="Moseman B.L."/>
            <person name="Mundt M."/>
            <person name="Munk A.C."/>
            <person name="Okinaka R.T."/>
            <person name="Parson-Quintana B."/>
            <person name="Reilly L.P."/>
            <person name="Richardson P."/>
            <person name="Robinson D.L."/>
            <person name="Rubin E."/>
            <person name="Saunders E."/>
            <person name="Tapia R."/>
            <person name="Tesmer J.G."/>
            <person name="Thayer N."/>
            <person name="Thompson L.S."/>
            <person name="Tice H."/>
            <person name="Ticknor L.O."/>
            <person name="Wills P.L."/>
            <person name="Brettin T.S."/>
            <person name="Gilna P."/>
        </authorList>
    </citation>
    <scope>NUCLEOTIDE SEQUENCE [LARGE SCALE GENOMIC DNA]</scope>
    <source>
        <strain>97-27</strain>
    </source>
</reference>
<dbReference type="EC" id="2.1.1.182" evidence="1"/>
<dbReference type="EMBL" id="AE017355">
    <property type="protein sequence ID" value="AAT59802.1"/>
    <property type="molecule type" value="Genomic_DNA"/>
</dbReference>
<dbReference type="RefSeq" id="WP_000651552.1">
    <property type="nucleotide sequence ID" value="NC_005957.1"/>
</dbReference>
<dbReference type="RefSeq" id="YP_034395.1">
    <property type="nucleotide sequence ID" value="NC_005957.1"/>
</dbReference>
<dbReference type="SMR" id="Q6HPX5"/>
<dbReference type="GeneID" id="75083305"/>
<dbReference type="KEGG" id="btk:BT9727_0037"/>
<dbReference type="PATRIC" id="fig|281309.8.peg.38"/>
<dbReference type="HOGENOM" id="CLU_041220_0_0_9"/>
<dbReference type="Proteomes" id="UP000001301">
    <property type="component" value="Chromosome"/>
</dbReference>
<dbReference type="GO" id="GO:0005829">
    <property type="term" value="C:cytosol"/>
    <property type="evidence" value="ECO:0007669"/>
    <property type="project" value="TreeGrafter"/>
</dbReference>
<dbReference type="GO" id="GO:0052908">
    <property type="term" value="F:16S rRNA (adenine(1518)-N(6)/adenine(1519)-N(6))-dimethyltransferase activity"/>
    <property type="evidence" value="ECO:0007669"/>
    <property type="project" value="UniProtKB-EC"/>
</dbReference>
<dbReference type="GO" id="GO:0003723">
    <property type="term" value="F:RNA binding"/>
    <property type="evidence" value="ECO:0007669"/>
    <property type="project" value="UniProtKB-KW"/>
</dbReference>
<dbReference type="CDD" id="cd02440">
    <property type="entry name" value="AdoMet_MTases"/>
    <property type="match status" value="1"/>
</dbReference>
<dbReference type="FunFam" id="1.10.8.100:FF:000002">
    <property type="entry name" value="Ribosomal RNA small subunit methyltransferase A"/>
    <property type="match status" value="1"/>
</dbReference>
<dbReference type="FunFam" id="3.40.50.150:FF:000023">
    <property type="entry name" value="Ribosomal RNA small subunit methyltransferase A"/>
    <property type="match status" value="1"/>
</dbReference>
<dbReference type="Gene3D" id="1.10.8.100">
    <property type="entry name" value="Ribosomal RNA adenine dimethylase-like, domain 2"/>
    <property type="match status" value="1"/>
</dbReference>
<dbReference type="Gene3D" id="3.40.50.150">
    <property type="entry name" value="Vaccinia Virus protein VP39"/>
    <property type="match status" value="1"/>
</dbReference>
<dbReference type="HAMAP" id="MF_00607">
    <property type="entry name" value="16SrRNA_methyltr_A"/>
    <property type="match status" value="1"/>
</dbReference>
<dbReference type="InterPro" id="IPR001737">
    <property type="entry name" value="KsgA/Erm"/>
</dbReference>
<dbReference type="InterPro" id="IPR023165">
    <property type="entry name" value="rRNA_Ade_diMease-like_C"/>
</dbReference>
<dbReference type="InterPro" id="IPR020596">
    <property type="entry name" value="rRNA_Ade_Mease_Trfase_CS"/>
</dbReference>
<dbReference type="InterPro" id="IPR020598">
    <property type="entry name" value="rRNA_Ade_methylase_Trfase_N"/>
</dbReference>
<dbReference type="InterPro" id="IPR011530">
    <property type="entry name" value="rRNA_adenine_dimethylase"/>
</dbReference>
<dbReference type="InterPro" id="IPR029063">
    <property type="entry name" value="SAM-dependent_MTases_sf"/>
</dbReference>
<dbReference type="NCBIfam" id="TIGR00755">
    <property type="entry name" value="ksgA"/>
    <property type="match status" value="1"/>
</dbReference>
<dbReference type="PANTHER" id="PTHR11727">
    <property type="entry name" value="DIMETHYLADENOSINE TRANSFERASE"/>
    <property type="match status" value="1"/>
</dbReference>
<dbReference type="PANTHER" id="PTHR11727:SF7">
    <property type="entry name" value="DIMETHYLADENOSINE TRANSFERASE-RELATED"/>
    <property type="match status" value="1"/>
</dbReference>
<dbReference type="Pfam" id="PF00398">
    <property type="entry name" value="RrnaAD"/>
    <property type="match status" value="1"/>
</dbReference>
<dbReference type="SMART" id="SM00650">
    <property type="entry name" value="rADc"/>
    <property type="match status" value="1"/>
</dbReference>
<dbReference type="SUPFAM" id="SSF53335">
    <property type="entry name" value="S-adenosyl-L-methionine-dependent methyltransferases"/>
    <property type="match status" value="1"/>
</dbReference>
<dbReference type="PROSITE" id="PS01131">
    <property type="entry name" value="RRNA_A_DIMETH"/>
    <property type="match status" value="1"/>
</dbReference>
<dbReference type="PROSITE" id="PS51689">
    <property type="entry name" value="SAM_RNA_A_N6_MT"/>
    <property type="match status" value="1"/>
</dbReference>
<gene>
    <name evidence="1" type="primary">rsmA</name>
    <name evidence="1" type="synonym">ksgA</name>
    <name type="ordered locus">BT9727_0037</name>
</gene>
<keyword id="KW-0963">Cytoplasm</keyword>
<keyword id="KW-0489">Methyltransferase</keyword>
<keyword id="KW-0694">RNA-binding</keyword>
<keyword id="KW-0698">rRNA processing</keyword>
<keyword id="KW-0949">S-adenosyl-L-methionine</keyword>
<keyword id="KW-0808">Transferase</keyword>
<proteinExistence type="inferred from homology"/>
<organism>
    <name type="scientific">Bacillus thuringiensis subsp. konkukian (strain 97-27)</name>
    <dbReference type="NCBI Taxonomy" id="281309"/>
    <lineage>
        <taxon>Bacteria</taxon>
        <taxon>Bacillati</taxon>
        <taxon>Bacillota</taxon>
        <taxon>Bacilli</taxon>
        <taxon>Bacillales</taxon>
        <taxon>Bacillaceae</taxon>
        <taxon>Bacillus</taxon>
        <taxon>Bacillus cereus group</taxon>
    </lineage>
</organism>
<evidence type="ECO:0000255" key="1">
    <source>
        <dbReference type="HAMAP-Rule" id="MF_00607"/>
    </source>
</evidence>
<name>RSMA_BACHK</name>
<comment type="function">
    <text evidence="1">Specifically dimethylates two adjacent adenosines (A1518 and A1519) in the loop of a conserved hairpin near the 3'-end of 16S rRNA in the 30S particle. May play a critical role in biogenesis of 30S subunits.</text>
</comment>
<comment type="catalytic activity">
    <reaction evidence="1">
        <text>adenosine(1518)/adenosine(1519) in 16S rRNA + 4 S-adenosyl-L-methionine = N(6)-dimethyladenosine(1518)/N(6)-dimethyladenosine(1519) in 16S rRNA + 4 S-adenosyl-L-homocysteine + 4 H(+)</text>
        <dbReference type="Rhea" id="RHEA:19609"/>
        <dbReference type="Rhea" id="RHEA-COMP:10232"/>
        <dbReference type="Rhea" id="RHEA-COMP:10233"/>
        <dbReference type="ChEBI" id="CHEBI:15378"/>
        <dbReference type="ChEBI" id="CHEBI:57856"/>
        <dbReference type="ChEBI" id="CHEBI:59789"/>
        <dbReference type="ChEBI" id="CHEBI:74411"/>
        <dbReference type="ChEBI" id="CHEBI:74493"/>
        <dbReference type="EC" id="2.1.1.182"/>
    </reaction>
</comment>
<comment type="subcellular location">
    <subcellularLocation>
        <location evidence="1">Cytoplasm</location>
    </subcellularLocation>
</comment>
<comment type="similarity">
    <text evidence="1">Belongs to the class I-like SAM-binding methyltransferase superfamily. rRNA adenine N(6)-methyltransferase family. RsmA subfamily.</text>
</comment>
<protein>
    <recommendedName>
        <fullName evidence="1">Ribosomal RNA small subunit methyltransferase A</fullName>
        <ecNumber evidence="1">2.1.1.182</ecNumber>
    </recommendedName>
    <alternativeName>
        <fullName evidence="1">16S rRNA (adenine(1518)-N(6)/adenine(1519)-N(6))-dimethyltransferase</fullName>
    </alternativeName>
    <alternativeName>
        <fullName evidence="1">16S rRNA dimethyladenosine transferase</fullName>
    </alternativeName>
    <alternativeName>
        <fullName evidence="1">16S rRNA dimethylase</fullName>
    </alternativeName>
    <alternativeName>
        <fullName evidence="1">S-adenosylmethionine-6-N', N'-adenosyl(rRNA) dimethyltransferase</fullName>
    </alternativeName>
</protein>